<name>RL10_BEUC1</name>
<organism>
    <name type="scientific">Beutenbergia cavernae (strain ATCC BAA-8 / DSM 12333 / CCUG 43141 / JCM 11478 / NBRC 16432 / NCIMB 13614 / HKI 0122)</name>
    <dbReference type="NCBI Taxonomy" id="471853"/>
    <lineage>
        <taxon>Bacteria</taxon>
        <taxon>Bacillati</taxon>
        <taxon>Actinomycetota</taxon>
        <taxon>Actinomycetes</taxon>
        <taxon>Micrococcales</taxon>
        <taxon>Beutenbergiaceae</taxon>
        <taxon>Beutenbergia</taxon>
    </lineage>
</organism>
<dbReference type="EMBL" id="CP001618">
    <property type="protein sequence ID" value="ACQ81401.1"/>
    <property type="molecule type" value="Genomic_DNA"/>
</dbReference>
<dbReference type="RefSeq" id="WP_015883641.1">
    <property type="nucleotide sequence ID" value="NC_012669.1"/>
</dbReference>
<dbReference type="SMR" id="C5C0K5"/>
<dbReference type="STRING" id="471853.Bcav_3157"/>
<dbReference type="KEGG" id="bcv:Bcav_3157"/>
<dbReference type="eggNOG" id="COG0244">
    <property type="taxonomic scope" value="Bacteria"/>
</dbReference>
<dbReference type="HOGENOM" id="CLU_092227_1_0_11"/>
<dbReference type="OrthoDB" id="3186107at2"/>
<dbReference type="Proteomes" id="UP000007962">
    <property type="component" value="Chromosome"/>
</dbReference>
<dbReference type="GO" id="GO:0015934">
    <property type="term" value="C:large ribosomal subunit"/>
    <property type="evidence" value="ECO:0007669"/>
    <property type="project" value="InterPro"/>
</dbReference>
<dbReference type="GO" id="GO:0070180">
    <property type="term" value="F:large ribosomal subunit rRNA binding"/>
    <property type="evidence" value="ECO:0007669"/>
    <property type="project" value="UniProtKB-UniRule"/>
</dbReference>
<dbReference type="GO" id="GO:0003735">
    <property type="term" value="F:structural constituent of ribosome"/>
    <property type="evidence" value="ECO:0007669"/>
    <property type="project" value="InterPro"/>
</dbReference>
<dbReference type="GO" id="GO:0006412">
    <property type="term" value="P:translation"/>
    <property type="evidence" value="ECO:0007669"/>
    <property type="project" value="UniProtKB-UniRule"/>
</dbReference>
<dbReference type="CDD" id="cd05797">
    <property type="entry name" value="Ribosomal_L10"/>
    <property type="match status" value="1"/>
</dbReference>
<dbReference type="Gene3D" id="3.30.70.1730">
    <property type="match status" value="1"/>
</dbReference>
<dbReference type="Gene3D" id="6.10.250.290">
    <property type="match status" value="1"/>
</dbReference>
<dbReference type="HAMAP" id="MF_00362">
    <property type="entry name" value="Ribosomal_uL10"/>
    <property type="match status" value="1"/>
</dbReference>
<dbReference type="InterPro" id="IPR001790">
    <property type="entry name" value="Ribosomal_uL10"/>
</dbReference>
<dbReference type="InterPro" id="IPR043141">
    <property type="entry name" value="Ribosomal_uL10-like_sf"/>
</dbReference>
<dbReference type="InterPro" id="IPR022973">
    <property type="entry name" value="Ribosomal_uL10_bac"/>
</dbReference>
<dbReference type="InterPro" id="IPR047865">
    <property type="entry name" value="Ribosomal_uL10_bac_type"/>
</dbReference>
<dbReference type="InterPro" id="IPR002363">
    <property type="entry name" value="Ribosomal_uL10_CS_bac"/>
</dbReference>
<dbReference type="NCBIfam" id="NF000955">
    <property type="entry name" value="PRK00099.1-1"/>
    <property type="match status" value="1"/>
</dbReference>
<dbReference type="PANTHER" id="PTHR11560">
    <property type="entry name" value="39S RIBOSOMAL PROTEIN L10, MITOCHONDRIAL"/>
    <property type="match status" value="1"/>
</dbReference>
<dbReference type="Pfam" id="PF00466">
    <property type="entry name" value="Ribosomal_L10"/>
    <property type="match status" value="1"/>
</dbReference>
<dbReference type="SUPFAM" id="SSF160369">
    <property type="entry name" value="Ribosomal protein L10-like"/>
    <property type="match status" value="1"/>
</dbReference>
<dbReference type="PROSITE" id="PS01109">
    <property type="entry name" value="RIBOSOMAL_L10"/>
    <property type="match status" value="1"/>
</dbReference>
<evidence type="ECO:0000255" key="1">
    <source>
        <dbReference type="HAMAP-Rule" id="MF_00362"/>
    </source>
</evidence>
<evidence type="ECO:0000305" key="2"/>
<feature type="chain" id="PRO_1000205437" description="Large ribosomal subunit protein uL10">
    <location>
        <begin position="1"/>
        <end position="173"/>
    </location>
</feature>
<protein>
    <recommendedName>
        <fullName evidence="1">Large ribosomal subunit protein uL10</fullName>
    </recommendedName>
    <alternativeName>
        <fullName evidence="2">50S ribosomal protein L10</fullName>
    </alternativeName>
</protein>
<gene>
    <name evidence="1" type="primary">rplJ</name>
    <name type="ordered locus">Bcav_3157</name>
</gene>
<accession>C5C0K5</accession>
<sequence length="173" mass="17819">MARPDKAAAVAELTEKFRSSSAAVLTEYRGLTVAQLKALRTSLGGSAHYAVVKNTLTAIAAKEAGIDAFEGQLSGPTAIAFVEGDPVAAAKGLRDFAKANPALVIKAGVLDGKAITSSEITALADLESREVLLAKAAGAFKAKLYQAAYLFTAPASQAVRTIDALREKQADAA</sequence>
<reference key="1">
    <citation type="journal article" date="2009" name="Stand. Genomic Sci.">
        <title>Complete genome sequence of Beutenbergia cavernae type strain (HKI 0122).</title>
        <authorList>
            <person name="Land M."/>
            <person name="Pukall R."/>
            <person name="Abt B."/>
            <person name="Goker M."/>
            <person name="Rohde M."/>
            <person name="Glavina Del Rio T."/>
            <person name="Tice H."/>
            <person name="Copeland A."/>
            <person name="Cheng J.F."/>
            <person name="Lucas S."/>
            <person name="Chen F."/>
            <person name="Nolan M."/>
            <person name="Bruce D."/>
            <person name="Goodwin L."/>
            <person name="Pitluck S."/>
            <person name="Ivanova N."/>
            <person name="Mavromatis K."/>
            <person name="Ovchinnikova G."/>
            <person name="Pati A."/>
            <person name="Chen A."/>
            <person name="Palaniappan K."/>
            <person name="Hauser L."/>
            <person name="Chang Y.J."/>
            <person name="Jefferies C.C."/>
            <person name="Saunders E."/>
            <person name="Brettin T."/>
            <person name="Detter J.C."/>
            <person name="Han C."/>
            <person name="Chain P."/>
            <person name="Bristow J."/>
            <person name="Eisen J.A."/>
            <person name="Markowitz V."/>
            <person name="Hugenholtz P."/>
            <person name="Kyrpides N.C."/>
            <person name="Klenk H.P."/>
            <person name="Lapidus A."/>
        </authorList>
    </citation>
    <scope>NUCLEOTIDE SEQUENCE [LARGE SCALE GENOMIC DNA]</scope>
    <source>
        <strain>ATCC BAA-8 / DSM 12333 / CCUG 43141 / JCM 11478 / NBRC 16432 / NCIMB 13614 / HKI 0122</strain>
    </source>
</reference>
<keyword id="KW-1185">Reference proteome</keyword>
<keyword id="KW-0687">Ribonucleoprotein</keyword>
<keyword id="KW-0689">Ribosomal protein</keyword>
<keyword id="KW-0694">RNA-binding</keyword>
<keyword id="KW-0699">rRNA-binding</keyword>
<comment type="function">
    <text evidence="1">Forms part of the ribosomal stalk, playing a central role in the interaction of the ribosome with GTP-bound translation factors.</text>
</comment>
<comment type="subunit">
    <text evidence="1">Part of the ribosomal stalk of the 50S ribosomal subunit. The N-terminus interacts with L11 and the large rRNA to form the base of the stalk. The C-terminus forms an elongated spine to which L12 dimers bind in a sequential fashion forming a multimeric L10(L12)X complex.</text>
</comment>
<comment type="similarity">
    <text evidence="1">Belongs to the universal ribosomal protein uL10 family.</text>
</comment>
<proteinExistence type="inferred from homology"/>